<gene>
    <name evidence="1" type="primary">argG</name>
    <name type="ordered locus">DR_0674</name>
</gene>
<dbReference type="EC" id="6.3.4.5" evidence="1"/>
<dbReference type="EMBL" id="AE000513">
    <property type="protein sequence ID" value="AAF10250.1"/>
    <property type="molecule type" value="Genomic_DNA"/>
</dbReference>
<dbReference type="PIR" id="D75490">
    <property type="entry name" value="D75490"/>
</dbReference>
<dbReference type="RefSeq" id="NP_294397.1">
    <property type="nucleotide sequence ID" value="NC_001263.1"/>
</dbReference>
<dbReference type="RefSeq" id="WP_010887319.1">
    <property type="nucleotide sequence ID" value="NC_001263.1"/>
</dbReference>
<dbReference type="SMR" id="Q9RWJ4"/>
<dbReference type="FunCoup" id="Q9RWJ4">
    <property type="interactions" value="395"/>
</dbReference>
<dbReference type="STRING" id="243230.DR_0674"/>
<dbReference type="PaxDb" id="243230-DR_0674"/>
<dbReference type="EnsemblBacteria" id="AAF10250">
    <property type="protein sequence ID" value="AAF10250"/>
    <property type="gene ID" value="DR_0674"/>
</dbReference>
<dbReference type="GeneID" id="69516919"/>
<dbReference type="KEGG" id="dra:DR_0674"/>
<dbReference type="PATRIC" id="fig|243230.17.peg.850"/>
<dbReference type="eggNOG" id="COG0137">
    <property type="taxonomic scope" value="Bacteria"/>
</dbReference>
<dbReference type="HOGENOM" id="CLU_032784_4_2_0"/>
<dbReference type="InParanoid" id="Q9RWJ4"/>
<dbReference type="OrthoDB" id="9801641at2"/>
<dbReference type="UniPathway" id="UPA00068">
    <property type="reaction ID" value="UER00113"/>
</dbReference>
<dbReference type="Proteomes" id="UP000002524">
    <property type="component" value="Chromosome 1"/>
</dbReference>
<dbReference type="GO" id="GO:0005737">
    <property type="term" value="C:cytoplasm"/>
    <property type="evidence" value="ECO:0000318"/>
    <property type="project" value="GO_Central"/>
</dbReference>
<dbReference type="GO" id="GO:0004055">
    <property type="term" value="F:argininosuccinate synthase activity"/>
    <property type="evidence" value="ECO:0000318"/>
    <property type="project" value="GO_Central"/>
</dbReference>
<dbReference type="GO" id="GO:0005524">
    <property type="term" value="F:ATP binding"/>
    <property type="evidence" value="ECO:0007669"/>
    <property type="project" value="UniProtKB-UniRule"/>
</dbReference>
<dbReference type="GO" id="GO:0000053">
    <property type="term" value="P:argininosuccinate metabolic process"/>
    <property type="evidence" value="ECO:0000318"/>
    <property type="project" value="GO_Central"/>
</dbReference>
<dbReference type="GO" id="GO:0006526">
    <property type="term" value="P:L-arginine biosynthetic process"/>
    <property type="evidence" value="ECO:0000318"/>
    <property type="project" value="GO_Central"/>
</dbReference>
<dbReference type="GO" id="GO:0000050">
    <property type="term" value="P:urea cycle"/>
    <property type="evidence" value="ECO:0000318"/>
    <property type="project" value="GO_Central"/>
</dbReference>
<dbReference type="CDD" id="cd01999">
    <property type="entry name" value="ASS"/>
    <property type="match status" value="1"/>
</dbReference>
<dbReference type="FunFam" id="3.40.50.620:FF:000019">
    <property type="entry name" value="Argininosuccinate synthase"/>
    <property type="match status" value="1"/>
</dbReference>
<dbReference type="FunFam" id="3.90.1260.10:FF:000007">
    <property type="entry name" value="Argininosuccinate synthase"/>
    <property type="match status" value="1"/>
</dbReference>
<dbReference type="Gene3D" id="3.90.1260.10">
    <property type="entry name" value="Argininosuccinate synthetase, chain A, domain 2"/>
    <property type="match status" value="1"/>
</dbReference>
<dbReference type="Gene3D" id="3.40.50.620">
    <property type="entry name" value="HUPs"/>
    <property type="match status" value="1"/>
</dbReference>
<dbReference type="HAMAP" id="MF_00005">
    <property type="entry name" value="Arg_succ_synth_type1"/>
    <property type="match status" value="1"/>
</dbReference>
<dbReference type="InterPro" id="IPR048268">
    <property type="entry name" value="Arginosuc_syn_C"/>
</dbReference>
<dbReference type="InterPro" id="IPR048267">
    <property type="entry name" value="Arginosuc_syn_N"/>
</dbReference>
<dbReference type="InterPro" id="IPR001518">
    <property type="entry name" value="Arginosuc_synth"/>
</dbReference>
<dbReference type="InterPro" id="IPR018223">
    <property type="entry name" value="Arginosuc_synth_CS"/>
</dbReference>
<dbReference type="InterPro" id="IPR023434">
    <property type="entry name" value="Arginosuc_synth_type_1_subfam"/>
</dbReference>
<dbReference type="InterPro" id="IPR024074">
    <property type="entry name" value="AS_cat/multimer_dom_body"/>
</dbReference>
<dbReference type="InterPro" id="IPR014729">
    <property type="entry name" value="Rossmann-like_a/b/a_fold"/>
</dbReference>
<dbReference type="NCBIfam" id="TIGR00032">
    <property type="entry name" value="argG"/>
    <property type="match status" value="1"/>
</dbReference>
<dbReference type="NCBIfam" id="NF001770">
    <property type="entry name" value="PRK00509.1"/>
    <property type="match status" value="1"/>
</dbReference>
<dbReference type="PANTHER" id="PTHR11587">
    <property type="entry name" value="ARGININOSUCCINATE SYNTHASE"/>
    <property type="match status" value="1"/>
</dbReference>
<dbReference type="PANTHER" id="PTHR11587:SF2">
    <property type="entry name" value="ARGININOSUCCINATE SYNTHASE"/>
    <property type="match status" value="1"/>
</dbReference>
<dbReference type="Pfam" id="PF20979">
    <property type="entry name" value="Arginosuc_syn_C"/>
    <property type="match status" value="1"/>
</dbReference>
<dbReference type="Pfam" id="PF00764">
    <property type="entry name" value="Arginosuc_synth"/>
    <property type="match status" value="1"/>
</dbReference>
<dbReference type="SUPFAM" id="SSF52402">
    <property type="entry name" value="Adenine nucleotide alpha hydrolases-like"/>
    <property type="match status" value="1"/>
</dbReference>
<dbReference type="SUPFAM" id="SSF69864">
    <property type="entry name" value="Argininosuccinate synthetase, C-terminal domain"/>
    <property type="match status" value="1"/>
</dbReference>
<dbReference type="PROSITE" id="PS00564">
    <property type="entry name" value="ARGININOSUCCIN_SYN_1"/>
    <property type="match status" value="1"/>
</dbReference>
<dbReference type="PROSITE" id="PS00565">
    <property type="entry name" value="ARGININOSUCCIN_SYN_2"/>
    <property type="match status" value="1"/>
</dbReference>
<sequence length="402" mass="44877">MSKEKIVLAYSGGLDTSIILKWLQTERNYDVVCFTADLGQGDEVEEARVKALNTGAVAAYALDLREEFVRDYVFPMMRSSALYEGYYLLGTSIARPLIAKKMVEIAEKEGAVAISHGATGKGNDQVRFEMSAYALKPDIVTVAPWRDWDFQGRADLEAFAREHGIPVPTTKKDPWSMDANMLHISYEGGPLEDPWTEPPTHMFKLTVNPEDAPSEAEYVEIEYVNGDPVSINGEQLSPAALLTKANEIAGRHGVGRIDLVENRFVGMKSRGVYETPGGTLLYHARRAVESLTLDREVLHQRDALGPKYAELVYNGFWFAPEREALQVYFDHVAKSVTGTARLKLYKGNCIVAGRKAERSLYDKDLVSFEAGGDYNQHDAGAFIKLNSLRMRVQKRVEDKGKK</sequence>
<feature type="chain" id="PRO_0000148591" description="Argininosuccinate synthase">
    <location>
        <begin position="1"/>
        <end position="402"/>
    </location>
</feature>
<feature type="binding site" evidence="1">
    <location>
        <begin position="9"/>
        <end position="17"/>
    </location>
    <ligand>
        <name>ATP</name>
        <dbReference type="ChEBI" id="CHEBI:30616"/>
    </ligand>
</feature>
<feature type="binding site" evidence="1">
    <location>
        <position position="36"/>
    </location>
    <ligand>
        <name>ATP</name>
        <dbReference type="ChEBI" id="CHEBI:30616"/>
    </ligand>
</feature>
<feature type="binding site" evidence="1">
    <location>
        <position position="87"/>
    </location>
    <ligand>
        <name>L-citrulline</name>
        <dbReference type="ChEBI" id="CHEBI:57743"/>
    </ligand>
</feature>
<feature type="binding site" evidence="1">
    <location>
        <position position="92"/>
    </location>
    <ligand>
        <name>L-citrulline</name>
        <dbReference type="ChEBI" id="CHEBI:57743"/>
    </ligand>
</feature>
<feature type="binding site" evidence="1">
    <location>
        <position position="117"/>
    </location>
    <ligand>
        <name>ATP</name>
        <dbReference type="ChEBI" id="CHEBI:30616"/>
    </ligand>
</feature>
<feature type="binding site" evidence="1">
    <location>
        <position position="119"/>
    </location>
    <ligand>
        <name>L-aspartate</name>
        <dbReference type="ChEBI" id="CHEBI:29991"/>
    </ligand>
</feature>
<feature type="binding site" evidence="1">
    <location>
        <position position="123"/>
    </location>
    <ligand>
        <name>L-aspartate</name>
        <dbReference type="ChEBI" id="CHEBI:29991"/>
    </ligand>
</feature>
<feature type="binding site" evidence="1">
    <location>
        <position position="123"/>
    </location>
    <ligand>
        <name>L-citrulline</name>
        <dbReference type="ChEBI" id="CHEBI:57743"/>
    </ligand>
</feature>
<feature type="binding site" evidence="1">
    <location>
        <position position="124"/>
    </location>
    <ligand>
        <name>L-aspartate</name>
        <dbReference type="ChEBI" id="CHEBI:29991"/>
    </ligand>
</feature>
<feature type="binding site" evidence="1">
    <location>
        <position position="127"/>
    </location>
    <ligand>
        <name>L-citrulline</name>
        <dbReference type="ChEBI" id="CHEBI:57743"/>
    </ligand>
</feature>
<feature type="binding site" evidence="1">
    <location>
        <position position="176"/>
    </location>
    <ligand>
        <name>L-citrulline</name>
        <dbReference type="ChEBI" id="CHEBI:57743"/>
    </ligand>
</feature>
<feature type="binding site" evidence="1">
    <location>
        <position position="185"/>
    </location>
    <ligand>
        <name>L-citrulline</name>
        <dbReference type="ChEBI" id="CHEBI:57743"/>
    </ligand>
</feature>
<feature type="binding site" evidence="1">
    <location>
        <position position="261"/>
    </location>
    <ligand>
        <name>L-citrulline</name>
        <dbReference type="ChEBI" id="CHEBI:57743"/>
    </ligand>
</feature>
<feature type="binding site" evidence="1">
    <location>
        <position position="273"/>
    </location>
    <ligand>
        <name>L-citrulline</name>
        <dbReference type="ChEBI" id="CHEBI:57743"/>
    </ligand>
</feature>
<proteinExistence type="inferred from homology"/>
<comment type="catalytic activity">
    <reaction evidence="1">
        <text>L-citrulline + L-aspartate + ATP = 2-(N(omega)-L-arginino)succinate + AMP + diphosphate + H(+)</text>
        <dbReference type="Rhea" id="RHEA:10932"/>
        <dbReference type="ChEBI" id="CHEBI:15378"/>
        <dbReference type="ChEBI" id="CHEBI:29991"/>
        <dbReference type="ChEBI" id="CHEBI:30616"/>
        <dbReference type="ChEBI" id="CHEBI:33019"/>
        <dbReference type="ChEBI" id="CHEBI:57472"/>
        <dbReference type="ChEBI" id="CHEBI:57743"/>
        <dbReference type="ChEBI" id="CHEBI:456215"/>
        <dbReference type="EC" id="6.3.4.5"/>
    </reaction>
</comment>
<comment type="pathway">
    <text evidence="1">Amino-acid biosynthesis; L-arginine biosynthesis; L-arginine from L-ornithine and carbamoyl phosphate: step 2/3.</text>
</comment>
<comment type="subunit">
    <text evidence="1">Homotetramer.</text>
</comment>
<comment type="subcellular location">
    <subcellularLocation>
        <location evidence="1">Cytoplasm</location>
    </subcellularLocation>
</comment>
<comment type="similarity">
    <text evidence="1">Belongs to the argininosuccinate synthase family. Type 1 subfamily.</text>
</comment>
<protein>
    <recommendedName>
        <fullName evidence="1">Argininosuccinate synthase</fullName>
        <ecNumber evidence="1">6.3.4.5</ecNumber>
    </recommendedName>
    <alternativeName>
        <fullName evidence="1">Citrulline--aspartate ligase</fullName>
    </alternativeName>
</protein>
<organism>
    <name type="scientific">Deinococcus radiodurans (strain ATCC 13939 / DSM 20539 / JCM 16871 / CCUG 27074 / LMG 4051 / NBRC 15346 / NCIMB 9279 / VKM B-1422 / R1)</name>
    <dbReference type="NCBI Taxonomy" id="243230"/>
    <lineage>
        <taxon>Bacteria</taxon>
        <taxon>Thermotogati</taxon>
        <taxon>Deinococcota</taxon>
        <taxon>Deinococci</taxon>
        <taxon>Deinococcales</taxon>
        <taxon>Deinococcaceae</taxon>
        <taxon>Deinococcus</taxon>
    </lineage>
</organism>
<reference key="1">
    <citation type="journal article" date="1999" name="Science">
        <title>Genome sequence of the radioresistant bacterium Deinococcus radiodurans R1.</title>
        <authorList>
            <person name="White O."/>
            <person name="Eisen J.A."/>
            <person name="Heidelberg J.F."/>
            <person name="Hickey E.K."/>
            <person name="Peterson J.D."/>
            <person name="Dodson R.J."/>
            <person name="Haft D.H."/>
            <person name="Gwinn M.L."/>
            <person name="Nelson W.C."/>
            <person name="Richardson D.L."/>
            <person name="Moffat K.S."/>
            <person name="Qin H."/>
            <person name="Jiang L."/>
            <person name="Pamphile W."/>
            <person name="Crosby M."/>
            <person name="Shen M."/>
            <person name="Vamathevan J.J."/>
            <person name="Lam P."/>
            <person name="McDonald L.A."/>
            <person name="Utterback T.R."/>
            <person name="Zalewski C."/>
            <person name="Makarova K.S."/>
            <person name="Aravind L."/>
            <person name="Daly M.J."/>
            <person name="Minton K.W."/>
            <person name="Fleischmann R.D."/>
            <person name="Ketchum K.A."/>
            <person name="Nelson K.E."/>
            <person name="Salzberg S.L."/>
            <person name="Smith H.O."/>
            <person name="Venter J.C."/>
            <person name="Fraser C.M."/>
        </authorList>
    </citation>
    <scope>NUCLEOTIDE SEQUENCE [LARGE SCALE GENOMIC DNA]</scope>
    <source>
        <strain>ATCC 13939 / DSM 20539 / JCM 16871 / CCUG 27074 / LMG 4051 / NBRC 15346 / NCIMB 9279 / VKM B-1422 / R1</strain>
    </source>
</reference>
<name>ASSY_DEIRA</name>
<evidence type="ECO:0000255" key="1">
    <source>
        <dbReference type="HAMAP-Rule" id="MF_00005"/>
    </source>
</evidence>
<keyword id="KW-0028">Amino-acid biosynthesis</keyword>
<keyword id="KW-0055">Arginine biosynthesis</keyword>
<keyword id="KW-0067">ATP-binding</keyword>
<keyword id="KW-0963">Cytoplasm</keyword>
<keyword id="KW-0436">Ligase</keyword>
<keyword id="KW-0547">Nucleotide-binding</keyword>
<keyword id="KW-1185">Reference proteome</keyword>
<accession>Q9RWJ4</accession>